<protein>
    <recommendedName>
        <fullName evidence="2">Small ribosomal subunit protein uS7c</fullName>
    </recommendedName>
    <alternativeName>
        <fullName>30S ribosomal protein S7, plastid</fullName>
    </alternativeName>
</protein>
<organism>
    <name type="scientific">Aneura mirabilis</name>
    <name type="common">Parasitic liverwort</name>
    <name type="synonym">Cryptothallus mirabilis</name>
    <dbReference type="NCBI Taxonomy" id="280810"/>
    <lineage>
        <taxon>Eukaryota</taxon>
        <taxon>Viridiplantae</taxon>
        <taxon>Streptophyta</taxon>
        <taxon>Embryophyta</taxon>
        <taxon>Marchantiophyta</taxon>
        <taxon>Jungermanniopsida</taxon>
        <taxon>Metzgeriidae</taxon>
        <taxon>Metzgeriales</taxon>
        <taxon>Aneuraceae</taxon>
        <taxon>Aneura</taxon>
    </lineage>
</organism>
<geneLocation type="non-photosynthetic plastid"/>
<evidence type="ECO:0000250" key="1"/>
<evidence type="ECO:0000305" key="2"/>
<comment type="function">
    <text evidence="1">One of the primary rRNA binding proteins, it binds directly to 16S rRNA where it nucleates assembly of the head domain of the 30S subunit.</text>
</comment>
<comment type="subunit">
    <text evidence="1">Part of the 30S ribosomal subunit.</text>
</comment>
<comment type="subcellular location">
    <subcellularLocation>
        <location>Plastid</location>
    </subcellularLocation>
</comment>
<comment type="similarity">
    <text evidence="2">Belongs to the universal ribosomal protein uS7 family.</text>
</comment>
<accession>B0YPL5</accession>
<gene>
    <name type="primary">rps7</name>
</gene>
<name>RR7_ANEMR</name>
<keyword id="KW-0934">Plastid</keyword>
<keyword id="KW-0687">Ribonucleoprotein</keyword>
<keyword id="KW-0689">Ribosomal protein</keyword>
<keyword id="KW-0694">RNA-binding</keyword>
<keyword id="KW-0699">rRNA-binding</keyword>
<sequence>MSRENATEEKTTKPDPIYRNRLISMLVNRILRNGKKSLAHRILYGAMSSTRRDTGKNPLLILRQAMIKVTPDVVVKAKRIGGSTYQVPLEVGSMQGKALAIRWLLTASRKRSGRNMASKLGYELIDAAKDNGTAVRRKEETHKMAEANRAFAHFR</sequence>
<reference key="1">
    <citation type="journal article" date="2008" name="Mol. Biol. Evol.">
        <title>Functional gene losses occur with minimal size reduction in the plastid genome of the parasitic liverwort Aneura mirabilis.</title>
        <authorList>
            <person name="Wickett N.J."/>
            <person name="Zhang Y."/>
            <person name="Hansen S.K."/>
            <person name="Roper J.M."/>
            <person name="Kuehl J.V."/>
            <person name="Plock S.A."/>
            <person name="Wolf P.G."/>
            <person name="dePamphilis C.W."/>
            <person name="Boore J.L."/>
            <person name="Goffinet B."/>
        </authorList>
    </citation>
    <scope>NUCLEOTIDE SEQUENCE [LARGE SCALE GENOMIC DNA]</scope>
</reference>
<feature type="chain" id="PRO_0000344323" description="Small ribosomal subunit protein uS7c">
    <location>
        <begin position="1"/>
        <end position="155"/>
    </location>
</feature>
<dbReference type="EMBL" id="EU043314">
    <property type="protein sequence ID" value="ABS54462.1"/>
    <property type="molecule type" value="Genomic_DNA"/>
</dbReference>
<dbReference type="RefSeq" id="YP_001687201.1">
    <property type="nucleotide sequence ID" value="NC_010359.1"/>
</dbReference>
<dbReference type="SMR" id="B0YPL5"/>
<dbReference type="GeneID" id="5952204"/>
<dbReference type="GO" id="GO:0009536">
    <property type="term" value="C:plastid"/>
    <property type="evidence" value="ECO:0007669"/>
    <property type="project" value="UniProtKB-SubCell"/>
</dbReference>
<dbReference type="GO" id="GO:0015935">
    <property type="term" value="C:small ribosomal subunit"/>
    <property type="evidence" value="ECO:0007669"/>
    <property type="project" value="InterPro"/>
</dbReference>
<dbReference type="GO" id="GO:0019843">
    <property type="term" value="F:rRNA binding"/>
    <property type="evidence" value="ECO:0007669"/>
    <property type="project" value="UniProtKB-KW"/>
</dbReference>
<dbReference type="GO" id="GO:0003735">
    <property type="term" value="F:structural constituent of ribosome"/>
    <property type="evidence" value="ECO:0007669"/>
    <property type="project" value="InterPro"/>
</dbReference>
<dbReference type="GO" id="GO:0006412">
    <property type="term" value="P:translation"/>
    <property type="evidence" value="ECO:0007669"/>
    <property type="project" value="InterPro"/>
</dbReference>
<dbReference type="CDD" id="cd14871">
    <property type="entry name" value="uS7_Chloroplast"/>
    <property type="match status" value="1"/>
</dbReference>
<dbReference type="FunFam" id="1.10.455.10:FF:000001">
    <property type="entry name" value="30S ribosomal protein S7"/>
    <property type="match status" value="1"/>
</dbReference>
<dbReference type="Gene3D" id="1.10.455.10">
    <property type="entry name" value="Ribosomal protein S7 domain"/>
    <property type="match status" value="1"/>
</dbReference>
<dbReference type="HAMAP" id="MF_00480_B">
    <property type="entry name" value="Ribosomal_uS7_B"/>
    <property type="match status" value="1"/>
</dbReference>
<dbReference type="InterPro" id="IPR000235">
    <property type="entry name" value="Ribosomal_uS7"/>
</dbReference>
<dbReference type="InterPro" id="IPR005717">
    <property type="entry name" value="Ribosomal_uS7_bac/org-type"/>
</dbReference>
<dbReference type="InterPro" id="IPR020606">
    <property type="entry name" value="Ribosomal_uS7_CS"/>
</dbReference>
<dbReference type="InterPro" id="IPR023798">
    <property type="entry name" value="Ribosomal_uS7_dom"/>
</dbReference>
<dbReference type="InterPro" id="IPR036823">
    <property type="entry name" value="Ribosomal_uS7_dom_sf"/>
</dbReference>
<dbReference type="NCBIfam" id="TIGR01029">
    <property type="entry name" value="rpsG_bact"/>
    <property type="match status" value="1"/>
</dbReference>
<dbReference type="PANTHER" id="PTHR11205">
    <property type="entry name" value="RIBOSOMAL PROTEIN S7"/>
    <property type="match status" value="1"/>
</dbReference>
<dbReference type="Pfam" id="PF00177">
    <property type="entry name" value="Ribosomal_S7"/>
    <property type="match status" value="1"/>
</dbReference>
<dbReference type="PIRSF" id="PIRSF002122">
    <property type="entry name" value="RPS7p_RPS7a_RPS5e_RPS7o"/>
    <property type="match status" value="1"/>
</dbReference>
<dbReference type="SUPFAM" id="SSF47973">
    <property type="entry name" value="Ribosomal protein S7"/>
    <property type="match status" value="1"/>
</dbReference>
<dbReference type="PROSITE" id="PS00052">
    <property type="entry name" value="RIBOSOMAL_S7"/>
    <property type="match status" value="1"/>
</dbReference>
<proteinExistence type="inferred from homology"/>